<keyword id="KW-0067">ATP-binding</keyword>
<keyword id="KW-0520">NAD</keyword>
<keyword id="KW-0547">Nucleotide-binding</keyword>
<keyword id="KW-0548">Nucleotidyltransferase</keyword>
<keyword id="KW-0662">Pyridine nucleotide biosynthesis</keyword>
<keyword id="KW-1185">Reference proteome</keyword>
<keyword id="KW-0808">Transferase</keyword>
<accession>A0KN91</accession>
<feature type="chain" id="PRO_0000336676" description="Probable nicotinate-nucleotide adenylyltransferase">
    <location>
        <begin position="1"/>
        <end position="214"/>
    </location>
</feature>
<evidence type="ECO:0000255" key="1">
    <source>
        <dbReference type="HAMAP-Rule" id="MF_00244"/>
    </source>
</evidence>
<organism>
    <name type="scientific">Aeromonas hydrophila subsp. hydrophila (strain ATCC 7966 / DSM 30187 / BCRC 13018 / CCUG 14551 / JCM 1027 / KCTC 2358 / NCIMB 9240 / NCTC 8049)</name>
    <dbReference type="NCBI Taxonomy" id="380703"/>
    <lineage>
        <taxon>Bacteria</taxon>
        <taxon>Pseudomonadati</taxon>
        <taxon>Pseudomonadota</taxon>
        <taxon>Gammaproteobacteria</taxon>
        <taxon>Aeromonadales</taxon>
        <taxon>Aeromonadaceae</taxon>
        <taxon>Aeromonas</taxon>
    </lineage>
</organism>
<protein>
    <recommendedName>
        <fullName evidence="1">Probable nicotinate-nucleotide adenylyltransferase</fullName>
        <ecNumber evidence="1">2.7.7.18</ecNumber>
    </recommendedName>
    <alternativeName>
        <fullName evidence="1">Deamido-NAD(+) diphosphorylase</fullName>
    </alternativeName>
    <alternativeName>
        <fullName evidence="1">Deamido-NAD(+) pyrophosphorylase</fullName>
    </alternativeName>
    <alternativeName>
        <fullName evidence="1">Nicotinate mononucleotide adenylyltransferase</fullName>
        <shortName evidence="1">NaMN adenylyltransferase</shortName>
    </alternativeName>
</protein>
<sequence length="214" mass="24044">MLKPPIGILGGTFDPIHIGHLRPAIEARDALGLAEVRLLPNHIPPHRASPFCSSEQRLAMVALAAAENPGFVVDERELKRDTPSWTIDTLIELRHELPDTPLCFLMGMDSLLGLPSWHRWQELLDYAHLVVSTRPGWQPDYPAEVAELLARHQSQQVADLHRLRHGRIWLADNLPVELSATRLRALLATGADPRYLLPPSVAQYIRQQGLYRPA</sequence>
<proteinExistence type="inferred from homology"/>
<name>NADD_AERHH</name>
<dbReference type="EC" id="2.7.7.18" evidence="1"/>
<dbReference type="EMBL" id="CP000462">
    <property type="protein sequence ID" value="ABK36365.1"/>
    <property type="molecule type" value="Genomic_DNA"/>
</dbReference>
<dbReference type="RefSeq" id="WP_011707025.1">
    <property type="nucleotide sequence ID" value="NC_008570.1"/>
</dbReference>
<dbReference type="RefSeq" id="YP_857742.1">
    <property type="nucleotide sequence ID" value="NC_008570.1"/>
</dbReference>
<dbReference type="SMR" id="A0KN91"/>
<dbReference type="STRING" id="380703.AHA_3251"/>
<dbReference type="EnsemblBacteria" id="ABK36365">
    <property type="protein sequence ID" value="ABK36365"/>
    <property type="gene ID" value="AHA_3251"/>
</dbReference>
<dbReference type="GeneID" id="4490705"/>
<dbReference type="KEGG" id="aha:AHA_3251"/>
<dbReference type="PATRIC" id="fig|380703.7.peg.3246"/>
<dbReference type="eggNOG" id="COG1057">
    <property type="taxonomic scope" value="Bacteria"/>
</dbReference>
<dbReference type="HOGENOM" id="CLU_069765_0_0_6"/>
<dbReference type="OrthoDB" id="5295945at2"/>
<dbReference type="UniPathway" id="UPA00253">
    <property type="reaction ID" value="UER00332"/>
</dbReference>
<dbReference type="Proteomes" id="UP000000756">
    <property type="component" value="Chromosome"/>
</dbReference>
<dbReference type="GO" id="GO:0005524">
    <property type="term" value="F:ATP binding"/>
    <property type="evidence" value="ECO:0007669"/>
    <property type="project" value="UniProtKB-KW"/>
</dbReference>
<dbReference type="GO" id="GO:0004515">
    <property type="term" value="F:nicotinate-nucleotide adenylyltransferase activity"/>
    <property type="evidence" value="ECO:0007669"/>
    <property type="project" value="UniProtKB-UniRule"/>
</dbReference>
<dbReference type="GO" id="GO:0009435">
    <property type="term" value="P:NAD biosynthetic process"/>
    <property type="evidence" value="ECO:0007669"/>
    <property type="project" value="UniProtKB-UniRule"/>
</dbReference>
<dbReference type="CDD" id="cd02165">
    <property type="entry name" value="NMNAT"/>
    <property type="match status" value="1"/>
</dbReference>
<dbReference type="FunFam" id="3.40.50.620:FF:000039">
    <property type="entry name" value="Probable nicotinate-nucleotide adenylyltransferase"/>
    <property type="match status" value="1"/>
</dbReference>
<dbReference type="Gene3D" id="3.40.50.620">
    <property type="entry name" value="HUPs"/>
    <property type="match status" value="1"/>
</dbReference>
<dbReference type="HAMAP" id="MF_00244">
    <property type="entry name" value="NaMN_adenylyltr"/>
    <property type="match status" value="1"/>
</dbReference>
<dbReference type="InterPro" id="IPR004821">
    <property type="entry name" value="Cyt_trans-like"/>
</dbReference>
<dbReference type="InterPro" id="IPR005248">
    <property type="entry name" value="NadD/NMNAT"/>
</dbReference>
<dbReference type="InterPro" id="IPR014729">
    <property type="entry name" value="Rossmann-like_a/b/a_fold"/>
</dbReference>
<dbReference type="NCBIfam" id="TIGR00125">
    <property type="entry name" value="cyt_tran_rel"/>
    <property type="match status" value="1"/>
</dbReference>
<dbReference type="NCBIfam" id="TIGR00482">
    <property type="entry name" value="nicotinate (nicotinamide) nucleotide adenylyltransferase"/>
    <property type="match status" value="1"/>
</dbReference>
<dbReference type="NCBIfam" id="NF000839">
    <property type="entry name" value="PRK00071.1-1"/>
    <property type="match status" value="1"/>
</dbReference>
<dbReference type="NCBIfam" id="NF000840">
    <property type="entry name" value="PRK00071.1-3"/>
    <property type="match status" value="1"/>
</dbReference>
<dbReference type="PANTHER" id="PTHR39321">
    <property type="entry name" value="NICOTINATE-NUCLEOTIDE ADENYLYLTRANSFERASE-RELATED"/>
    <property type="match status" value="1"/>
</dbReference>
<dbReference type="PANTHER" id="PTHR39321:SF3">
    <property type="entry name" value="PHOSPHOPANTETHEINE ADENYLYLTRANSFERASE"/>
    <property type="match status" value="1"/>
</dbReference>
<dbReference type="Pfam" id="PF01467">
    <property type="entry name" value="CTP_transf_like"/>
    <property type="match status" value="1"/>
</dbReference>
<dbReference type="SUPFAM" id="SSF52374">
    <property type="entry name" value="Nucleotidylyl transferase"/>
    <property type="match status" value="1"/>
</dbReference>
<gene>
    <name evidence="1" type="primary">nadD</name>
    <name type="ordered locus">AHA_3251</name>
</gene>
<reference key="1">
    <citation type="journal article" date="2006" name="J. Bacteriol.">
        <title>Genome sequence of Aeromonas hydrophila ATCC 7966T: jack of all trades.</title>
        <authorList>
            <person name="Seshadri R."/>
            <person name="Joseph S.W."/>
            <person name="Chopra A.K."/>
            <person name="Sha J."/>
            <person name="Shaw J."/>
            <person name="Graf J."/>
            <person name="Haft D.H."/>
            <person name="Wu M."/>
            <person name="Ren Q."/>
            <person name="Rosovitz M.J."/>
            <person name="Madupu R."/>
            <person name="Tallon L."/>
            <person name="Kim M."/>
            <person name="Jin S."/>
            <person name="Vuong H."/>
            <person name="Stine O.C."/>
            <person name="Ali A."/>
            <person name="Horneman A.J."/>
            <person name="Heidelberg J.F."/>
        </authorList>
    </citation>
    <scope>NUCLEOTIDE SEQUENCE [LARGE SCALE GENOMIC DNA]</scope>
    <source>
        <strain>ATCC 7966 / DSM 30187 / BCRC 13018 / CCUG 14551 / JCM 1027 / KCTC 2358 / NCIMB 9240 / NCTC 8049</strain>
    </source>
</reference>
<comment type="function">
    <text evidence="1">Catalyzes the reversible adenylation of nicotinate mononucleotide (NaMN) to nicotinic acid adenine dinucleotide (NaAD).</text>
</comment>
<comment type="catalytic activity">
    <reaction evidence="1">
        <text>nicotinate beta-D-ribonucleotide + ATP + H(+) = deamido-NAD(+) + diphosphate</text>
        <dbReference type="Rhea" id="RHEA:22860"/>
        <dbReference type="ChEBI" id="CHEBI:15378"/>
        <dbReference type="ChEBI" id="CHEBI:30616"/>
        <dbReference type="ChEBI" id="CHEBI:33019"/>
        <dbReference type="ChEBI" id="CHEBI:57502"/>
        <dbReference type="ChEBI" id="CHEBI:58437"/>
        <dbReference type="EC" id="2.7.7.18"/>
    </reaction>
</comment>
<comment type="pathway">
    <text evidence="1">Cofactor biosynthesis; NAD(+) biosynthesis; deamido-NAD(+) from nicotinate D-ribonucleotide: step 1/1.</text>
</comment>
<comment type="similarity">
    <text evidence="1">Belongs to the NadD family.</text>
</comment>